<organism>
    <name type="scientific">Rattus norvegicus</name>
    <name type="common">Rat</name>
    <dbReference type="NCBI Taxonomy" id="10116"/>
    <lineage>
        <taxon>Eukaryota</taxon>
        <taxon>Metazoa</taxon>
        <taxon>Chordata</taxon>
        <taxon>Craniata</taxon>
        <taxon>Vertebrata</taxon>
        <taxon>Euteleostomi</taxon>
        <taxon>Mammalia</taxon>
        <taxon>Eutheria</taxon>
        <taxon>Euarchontoglires</taxon>
        <taxon>Glires</taxon>
        <taxon>Rodentia</taxon>
        <taxon>Myomorpha</taxon>
        <taxon>Muroidea</taxon>
        <taxon>Muridae</taxon>
        <taxon>Murinae</taxon>
        <taxon>Rattus</taxon>
    </lineage>
</organism>
<keyword id="KW-0002">3D-structure</keyword>
<keyword id="KW-1003">Cell membrane</keyword>
<keyword id="KW-0966">Cell projection</keyword>
<keyword id="KW-0963">Cytoplasm</keyword>
<keyword id="KW-0968">Cytoplasmic vesicle</keyword>
<keyword id="KW-0210">Decarboxylase</keyword>
<keyword id="KW-0903">Direct protein sequencing</keyword>
<keyword id="KW-0333">Golgi apparatus</keyword>
<keyword id="KW-0449">Lipoprotein</keyword>
<keyword id="KW-0456">Lyase</keyword>
<keyword id="KW-0472">Membrane</keyword>
<keyword id="KW-0530">Neurotransmitter biosynthesis</keyword>
<keyword id="KW-0564">Palmitate</keyword>
<keyword id="KW-0597">Phosphoprotein</keyword>
<keyword id="KW-0663">Pyridoxal phosphate</keyword>
<keyword id="KW-1185">Reference proteome</keyword>
<keyword id="KW-0770">Synapse</keyword>
<name>DCE2_RAT</name>
<accession>Q05683</accession>
<feature type="chain" id="PRO_0000146971" description="Glutamate decarboxylase 2">
    <location>
        <begin position="1"/>
        <end position="585"/>
    </location>
</feature>
<feature type="region of interest" description="Disordered" evidence="3">
    <location>
        <begin position="1"/>
        <end position="25"/>
    </location>
</feature>
<feature type="binding site" evidence="1">
    <location>
        <begin position="181"/>
        <end position="183"/>
    </location>
    <ligand>
        <name>substrate</name>
    </ligand>
</feature>
<feature type="binding site" evidence="1">
    <location>
        <position position="558"/>
    </location>
    <ligand>
        <name>substrate</name>
    </ligand>
</feature>
<feature type="modified residue" description="Phosphoserine" evidence="5 8">
    <location>
        <position position="3"/>
    </location>
</feature>
<feature type="modified residue" description="Phosphoserine" evidence="5">
    <location>
        <position position="6"/>
    </location>
</feature>
<feature type="modified residue" description="Phosphoserine" evidence="5">
    <location>
        <position position="10"/>
    </location>
</feature>
<feature type="modified residue" description="Phosphoserine" evidence="5 8">
    <location>
        <position position="13"/>
    </location>
</feature>
<feature type="modified residue" description="Phosphoserine" evidence="5">
    <location>
        <position position="17"/>
    </location>
</feature>
<feature type="modified residue" description="N6-(pyridoxal phosphate)lysine" evidence="1">
    <location>
        <position position="396"/>
    </location>
</feature>
<feature type="lipid moiety-binding region" description="S-palmitoyl cysteine" evidence="4">
    <location>
        <position position="30"/>
    </location>
</feature>
<feature type="lipid moiety-binding region" description="S-palmitoyl cysteine" evidence="4">
    <location>
        <position position="45"/>
    </location>
</feature>
<feature type="mutagenesis site" description="No effect on glutamate decarboxylase activity." evidence="5">
    <original>SFGSEDGS</original>
    <variation>AFGAEDGA</variation>
    <location>
        <begin position="10"/>
        <end position="17"/>
    </location>
</feature>
<feature type="mutagenesis site" description="Abolishes palmitoylation but not membrane-association; when associates with A-45. No effect on glutamate decarboxylase activity; when associated with A-45." evidence="4 5">
    <original>C</original>
    <variation>A</variation>
    <location>
        <position position="30"/>
    </location>
</feature>
<feature type="mutagenesis site" description="Abolishes palmitoylation but not membrane-association; when associates with A-30. No effect on glutamate decarboxylase activity; when associated with A-30." evidence="4 5">
    <original>C</original>
    <variation>A</variation>
    <location>
        <position position="45"/>
    </location>
</feature>
<feature type="mutagenesis site" description="No effect on palmitoylation." evidence="4">
    <original>C</original>
    <variation>S</variation>
    <location>
        <position position="73"/>
    </location>
</feature>
<feature type="mutagenesis site" description="No effect on palmitoylation." evidence="4">
    <original>C</original>
    <variation>S</variation>
    <location>
        <position position="75"/>
    </location>
</feature>
<feature type="mutagenesis site" description="No effect on palmitoylation." evidence="4">
    <original>C</original>
    <variation>S</variation>
    <location>
        <position position="80"/>
    </location>
</feature>
<feature type="mutagenesis site" description="No effect on palmitoylation." evidence="4">
    <original>C</original>
    <variation>S</variation>
    <location>
        <position position="82"/>
    </location>
</feature>
<feature type="mutagenesis site" description="No effect on palmitoylation." evidence="4">
    <original>C</original>
    <variation>S</variation>
    <location>
        <position position="101"/>
    </location>
</feature>
<feature type="sequence conflict" description="In Ref. 2; AA sequence." evidence="6" ref="2">
    <original>G</original>
    <variation>V</variation>
    <location>
        <position position="190"/>
    </location>
</feature>
<proteinExistence type="evidence at protein level"/>
<protein>
    <recommendedName>
        <fullName evidence="6">Glutamate decarboxylase 2</fullName>
        <ecNumber evidence="7">4.1.1.15</ecNumber>
    </recommendedName>
    <alternativeName>
        <fullName>65 kDa glutamic acid decarboxylase</fullName>
        <shortName>GAD-65</shortName>
    </alternativeName>
    <alternativeName>
        <fullName>Glutamate decarboxylase 65 kDa isoform</fullName>
    </alternativeName>
</protein>
<reference key="1">
    <citation type="journal article" date="1991" name="Neuron">
        <title>Two genes encode distinct glutamate decarboxylases.</title>
        <authorList>
            <person name="Erlander M.G."/>
            <person name="Tillakaratne N.J."/>
            <person name="Feldblum S."/>
            <person name="Patel N."/>
            <person name="Tobin A.J."/>
        </authorList>
    </citation>
    <scope>NUCLEOTIDE SEQUENCE [MRNA]</scope>
    <source>
        <tissue>Hippocampus</tissue>
    </source>
</reference>
<reference key="2">
    <citation type="journal article" date="1988" name="J. Neurosci.">
        <title>Characterization of the proteins purified with monoclonal antibodies to glutamic acid decarboxylase.</title>
        <authorList>
            <person name="Chang Y.C."/>
            <person name="Gottlieb D.I."/>
        </authorList>
    </citation>
    <scope>PROTEIN SEQUENCE OF 190-219; 225-266 AND 524-558</scope>
    <source>
        <tissue>Brain</tissue>
    </source>
</reference>
<reference key="3">
    <citation type="journal article" date="1992" name="J. Cell Biol.">
        <title>Membrane anchoring of the autoantigen GAD65 to microvesicles in pancreatic beta-cells by palmitoylation in the NH2-terminal domain.</title>
        <authorList>
            <person name="Christgau S."/>
            <person name="Aanstoot H.-J."/>
            <person name="Schierbeck H."/>
            <person name="Begley K."/>
            <person name="Tullin S."/>
            <person name="Hejnaes K."/>
            <person name="Baekkeskov S."/>
        </authorList>
    </citation>
    <scope>SUBCELLULAR LOCATION</scope>
    <scope>PALMITOYLATION</scope>
</reference>
<reference key="4">
    <citation type="journal article" date="1994" name="J. Cell Biol.">
        <title>Amino acid residues 24-31 but not palmitoylation of cysteines 30 and 45 are required for membrane anchoring of glutamic acid decarboxylase, GAD65.</title>
        <authorList>
            <person name="Shi Y."/>
            <person name="Veit B."/>
            <person name="Baekkeskov S."/>
        </authorList>
    </citation>
    <scope>PALMITOYLATION AT CYS-30 AND CYS-45</scope>
    <scope>MUTAGENESIS OF CYS-30; CYS-45; CYS-73; CYS-75; CYS-80; CYS-82 AND CYS-101</scope>
</reference>
<reference key="5">
    <citation type="journal article" date="1997" name="J. Biol. Chem.">
        <title>Phosphorylation of serine residues 3, 6, 10, and 13 distinguishes membrane anchored from soluble glutamic acid decarboxylase 65 and is restricted to glutamic acid decarboxylase 65alpha.</title>
        <authorList>
            <person name="Namchuk M."/>
            <person name="Lindsay L."/>
            <person name="Turck C.W."/>
            <person name="Kanaani J."/>
            <person name="Baekkeskov S."/>
        </authorList>
    </citation>
    <scope>PHOSPHORYLATION AT SER-3; SER-6; SER-10 AND SER-13</scope>
    <scope>BIOPHYSICOCHEMICAL PROPERTIES</scope>
    <scope>CATALYTIC ACTIVITY</scope>
    <scope>PHOSPHORYLATION AT SER-10; SER-13 AND SER-17</scope>
    <scope>MUTAGENESIS OF 10-SER--SER-17; CYS-30 AND CYS-45</scope>
    <scope>COFACTOR</scope>
</reference>
<reference key="6">
    <citation type="journal article" date="2012" name="Nat. Commun.">
        <title>Quantitative maps of protein phosphorylation sites across 14 different rat organs and tissues.</title>
        <authorList>
            <person name="Lundby A."/>
            <person name="Secher A."/>
            <person name="Lage K."/>
            <person name="Nordsborg N.B."/>
            <person name="Dmytriyev A."/>
            <person name="Lundby C."/>
            <person name="Olsen J.V."/>
        </authorList>
    </citation>
    <scope>PHOSPHORYLATION [LARGE SCALE ANALYSIS] AT SER-3 AND SER-13</scope>
    <scope>IDENTIFICATION BY MASS SPECTROMETRY [LARGE SCALE ANALYSIS]</scope>
</reference>
<gene>
    <name type="primary">Gad2</name>
    <name type="synonym">Gad65</name>
</gene>
<comment type="function">
    <text evidence="7">Catalyzes the production of GABA.</text>
</comment>
<comment type="catalytic activity">
    <reaction evidence="7">
        <text>L-glutamate + H(+) = 4-aminobutanoate + CO2</text>
        <dbReference type="Rhea" id="RHEA:17785"/>
        <dbReference type="ChEBI" id="CHEBI:15378"/>
        <dbReference type="ChEBI" id="CHEBI:16526"/>
        <dbReference type="ChEBI" id="CHEBI:29985"/>
        <dbReference type="ChEBI" id="CHEBI:59888"/>
        <dbReference type="EC" id="4.1.1.15"/>
    </reaction>
    <physiologicalReaction direction="left-to-right" evidence="7">
        <dbReference type="Rhea" id="RHEA:17786"/>
    </physiologicalReaction>
</comment>
<comment type="cofactor">
    <cofactor evidence="7">
        <name>pyridoxal 5'-phosphate</name>
        <dbReference type="ChEBI" id="CHEBI:597326"/>
    </cofactor>
</comment>
<comment type="biophysicochemical properties">
    <kinetics>
        <KM evidence="5">1.02 mM for glutamate</KM>
    </kinetics>
</comment>
<comment type="subunit">
    <text evidence="2">Homodimer.</text>
</comment>
<comment type="subcellular location">
    <subcellularLocation>
        <location evidence="5">Cytoplasm</location>
        <location evidence="5">Cytosol</location>
    </subcellularLocation>
    <subcellularLocation>
        <location evidence="2">Cytoplasmic vesicle</location>
    </subcellularLocation>
    <subcellularLocation>
        <location evidence="2">Presynaptic cell membrane</location>
        <topology evidence="2">Lipid-anchor</topology>
    </subcellularLocation>
    <subcellularLocation>
        <location evidence="2">Golgi apparatus membrane</location>
        <topology evidence="2">Peripheral membrane protein</topology>
        <orientation evidence="2">Cytoplasmic side</orientation>
    </subcellularLocation>
    <text evidence="2">Associated to cytoplasmic vesicles. In neurons, cytosolic leaflet of Golgi membranes and presynaptic clusters.</text>
</comment>
<comment type="PTM">
    <text>The N-terminus is blocked.</text>
</comment>
<comment type="PTM">
    <text evidence="5">Phosphorylated; which does not affect kinetic parameters or subcellular location.</text>
</comment>
<comment type="PTM">
    <text evidence="1">Palmitoylated; which is required for presynaptic clustering.</text>
</comment>
<comment type="similarity">
    <text evidence="6">Belongs to the group II decarboxylase family.</text>
</comment>
<dbReference type="EC" id="4.1.1.15" evidence="7"/>
<dbReference type="EMBL" id="M72422">
    <property type="protein sequence ID" value="AAA63488.1"/>
    <property type="molecule type" value="mRNA"/>
</dbReference>
<dbReference type="PIR" id="JH0423">
    <property type="entry name" value="JH0423"/>
</dbReference>
<dbReference type="RefSeq" id="NP_036695.1">
    <property type="nucleotide sequence ID" value="NM_012563.2"/>
</dbReference>
<dbReference type="PDB" id="3CUP">
    <property type="method" value="X-ray"/>
    <property type="resolution" value="3.09 A"/>
    <property type="chains" value="B=221-235"/>
</dbReference>
<dbReference type="PDBsum" id="3CUP"/>
<dbReference type="SMR" id="Q05683"/>
<dbReference type="BioGRID" id="246551">
    <property type="interactions" value="2"/>
</dbReference>
<dbReference type="ComplexPortal" id="CPX-3063">
    <property type="entry name" value="Glutamate decarboxylase 1/2 complex"/>
</dbReference>
<dbReference type="ComplexPortal" id="CPX-3067">
    <property type="entry name" value="Glutamate decarboxylase 2 complex"/>
</dbReference>
<dbReference type="FunCoup" id="Q05683">
    <property type="interactions" value="1334"/>
</dbReference>
<dbReference type="IntAct" id="Q05683">
    <property type="interactions" value="1"/>
</dbReference>
<dbReference type="STRING" id="10116.ENSRNOP00000024901"/>
<dbReference type="BindingDB" id="Q05683"/>
<dbReference type="iPTMnet" id="Q05683"/>
<dbReference type="PhosphoSitePlus" id="Q05683"/>
<dbReference type="SwissPalm" id="Q05683"/>
<dbReference type="PaxDb" id="10116-ENSRNOP00000024901"/>
<dbReference type="ABCD" id="Q05683">
    <property type="antibodies" value="1 sequenced antibody"/>
</dbReference>
<dbReference type="Ensembl" id="ENSRNOT00000024901.5">
    <property type="protein sequence ID" value="ENSRNOP00000024901.2"/>
    <property type="gene ID" value="ENSRNOG00000018200.5"/>
</dbReference>
<dbReference type="GeneID" id="24380"/>
<dbReference type="KEGG" id="rno:24380"/>
<dbReference type="UCSC" id="RGD:2653">
    <property type="organism name" value="rat"/>
</dbReference>
<dbReference type="AGR" id="RGD:2653"/>
<dbReference type="CTD" id="2572"/>
<dbReference type="RGD" id="2653">
    <property type="gene designation" value="Gad2"/>
</dbReference>
<dbReference type="eggNOG" id="KOG0629">
    <property type="taxonomic scope" value="Eukaryota"/>
</dbReference>
<dbReference type="GeneTree" id="ENSGT00940000157951"/>
<dbReference type="HOGENOM" id="CLU_011856_0_0_1"/>
<dbReference type="InParanoid" id="Q05683"/>
<dbReference type="OMA" id="AGMVIFK"/>
<dbReference type="OrthoDB" id="392571at2759"/>
<dbReference type="PhylomeDB" id="Q05683"/>
<dbReference type="TreeFam" id="TF314688"/>
<dbReference type="BRENDA" id="4.1.1.15">
    <property type="organism ID" value="5301"/>
</dbReference>
<dbReference type="Reactome" id="R-RNO-888568">
    <property type="pathway name" value="GABA synthesis"/>
</dbReference>
<dbReference type="Reactome" id="R-RNO-888590">
    <property type="pathway name" value="GABA synthesis, release, reuptake and degradation"/>
</dbReference>
<dbReference type="SABIO-RK" id="Q05683"/>
<dbReference type="PRO" id="PR:Q05683"/>
<dbReference type="Proteomes" id="UP000002494">
    <property type="component" value="Chromosome 17"/>
</dbReference>
<dbReference type="Bgee" id="ENSRNOG00000018200">
    <property type="expression patterns" value="Expressed in cerebellum and 4 other cell types or tissues"/>
</dbReference>
<dbReference type="GO" id="GO:0030424">
    <property type="term" value="C:axon"/>
    <property type="evidence" value="ECO:0000266"/>
    <property type="project" value="RGD"/>
</dbReference>
<dbReference type="GO" id="GO:0005737">
    <property type="term" value="C:cytoplasm"/>
    <property type="evidence" value="ECO:0000266"/>
    <property type="project" value="RGD"/>
</dbReference>
<dbReference type="GO" id="GO:0005829">
    <property type="term" value="C:cytosol"/>
    <property type="evidence" value="ECO:0007669"/>
    <property type="project" value="UniProtKB-SubCell"/>
</dbReference>
<dbReference type="GO" id="GO:0098982">
    <property type="term" value="C:GABA-ergic synapse"/>
    <property type="evidence" value="ECO:0000314"/>
    <property type="project" value="SynGO"/>
</dbReference>
<dbReference type="GO" id="GO:0000139">
    <property type="term" value="C:Golgi membrane"/>
    <property type="evidence" value="ECO:0007669"/>
    <property type="project" value="UniProtKB-SubCell"/>
</dbReference>
<dbReference type="GO" id="GO:0060077">
    <property type="term" value="C:inhibitory synapse"/>
    <property type="evidence" value="ECO:0000314"/>
    <property type="project" value="MGI"/>
</dbReference>
<dbReference type="GO" id="GO:0043025">
    <property type="term" value="C:neuronal cell body"/>
    <property type="evidence" value="ECO:0000314"/>
    <property type="project" value="RGD"/>
</dbReference>
<dbReference type="GO" id="GO:0048471">
    <property type="term" value="C:perinuclear region of cytoplasm"/>
    <property type="evidence" value="ECO:0000314"/>
    <property type="project" value="RGD"/>
</dbReference>
<dbReference type="GO" id="GO:0098793">
    <property type="term" value="C:presynapse"/>
    <property type="evidence" value="ECO:0000314"/>
    <property type="project" value="RGD"/>
</dbReference>
<dbReference type="GO" id="GO:0042734">
    <property type="term" value="C:presynaptic membrane"/>
    <property type="evidence" value="ECO:0007669"/>
    <property type="project" value="UniProtKB-SubCell"/>
</dbReference>
<dbReference type="GO" id="GO:0045202">
    <property type="term" value="C:synapse"/>
    <property type="evidence" value="ECO:0000314"/>
    <property type="project" value="RGD"/>
</dbReference>
<dbReference type="GO" id="GO:0030672">
    <property type="term" value="C:synaptic vesicle membrane"/>
    <property type="evidence" value="ECO:0000314"/>
    <property type="project" value="RGD"/>
</dbReference>
<dbReference type="GO" id="GO:0016595">
    <property type="term" value="F:glutamate binding"/>
    <property type="evidence" value="ECO:0000314"/>
    <property type="project" value="RGD"/>
</dbReference>
<dbReference type="GO" id="GO:0004351">
    <property type="term" value="F:glutamate decarboxylase activity"/>
    <property type="evidence" value="ECO:0000314"/>
    <property type="project" value="RGD"/>
</dbReference>
<dbReference type="GO" id="GO:0044877">
    <property type="term" value="F:protein-containing complex binding"/>
    <property type="evidence" value="ECO:0000314"/>
    <property type="project" value="RGD"/>
</dbReference>
<dbReference type="GO" id="GO:0030170">
    <property type="term" value="F:pyridoxal phosphate binding"/>
    <property type="evidence" value="ECO:0000314"/>
    <property type="project" value="RGD"/>
</dbReference>
<dbReference type="GO" id="GO:1990416">
    <property type="term" value="P:cellular response to brain-derived neurotrophic factor stimulus"/>
    <property type="evidence" value="ECO:0000270"/>
    <property type="project" value="RGD"/>
</dbReference>
<dbReference type="GO" id="GO:0071456">
    <property type="term" value="P:cellular response to hypoxia"/>
    <property type="evidence" value="ECO:0000270"/>
    <property type="project" value="RGD"/>
</dbReference>
<dbReference type="GO" id="GO:0007268">
    <property type="term" value="P:chemical synaptic transmission"/>
    <property type="evidence" value="ECO:0000304"/>
    <property type="project" value="RGD"/>
</dbReference>
<dbReference type="GO" id="GO:0006540">
    <property type="term" value="P:gamma-aminobutyrate shunt"/>
    <property type="evidence" value="ECO:0000314"/>
    <property type="project" value="RGD"/>
</dbReference>
<dbReference type="GO" id="GO:0009449">
    <property type="term" value="P:gamma-aminobutyric acid biosynthetic process"/>
    <property type="evidence" value="ECO:0000314"/>
    <property type="project" value="RGD"/>
</dbReference>
<dbReference type="GO" id="GO:0061771">
    <property type="term" value="P:response to caloric restriction"/>
    <property type="evidence" value="ECO:0000270"/>
    <property type="project" value="RGD"/>
</dbReference>
<dbReference type="GO" id="GO:0042220">
    <property type="term" value="P:response to cocaine"/>
    <property type="evidence" value="ECO:0000270"/>
    <property type="project" value="RGD"/>
</dbReference>
<dbReference type="GO" id="GO:0071548">
    <property type="term" value="P:response to dexamethasone"/>
    <property type="evidence" value="ECO:0000270"/>
    <property type="project" value="RGD"/>
</dbReference>
<dbReference type="GO" id="GO:0032570">
    <property type="term" value="P:response to progesterone"/>
    <property type="evidence" value="ECO:0000270"/>
    <property type="project" value="RGD"/>
</dbReference>
<dbReference type="GO" id="GO:0006950">
    <property type="term" value="P:response to stress"/>
    <property type="evidence" value="ECO:0000270"/>
    <property type="project" value="RGD"/>
</dbReference>
<dbReference type="GO" id="GO:0009410">
    <property type="term" value="P:response to xenobiotic stimulus"/>
    <property type="evidence" value="ECO:0000270"/>
    <property type="project" value="RGD"/>
</dbReference>
<dbReference type="CDD" id="cd06450">
    <property type="entry name" value="DOPA_deC_like"/>
    <property type="match status" value="1"/>
</dbReference>
<dbReference type="FunFam" id="3.40.640.10:FF:000016">
    <property type="entry name" value="Glutamate decarboxylase like 1"/>
    <property type="match status" value="1"/>
</dbReference>
<dbReference type="Gene3D" id="3.90.1150.170">
    <property type="match status" value="1"/>
</dbReference>
<dbReference type="Gene3D" id="3.40.640.10">
    <property type="entry name" value="Type I PLP-dependent aspartate aminotransferase-like (Major domain)"/>
    <property type="match status" value="1"/>
</dbReference>
<dbReference type="InterPro" id="IPR002129">
    <property type="entry name" value="PyrdxlP-dep_de-COase"/>
</dbReference>
<dbReference type="InterPro" id="IPR015424">
    <property type="entry name" value="PyrdxlP-dep_Trfase"/>
</dbReference>
<dbReference type="InterPro" id="IPR015421">
    <property type="entry name" value="PyrdxlP-dep_Trfase_major"/>
</dbReference>
<dbReference type="InterPro" id="IPR021115">
    <property type="entry name" value="Pyridoxal-P_BS"/>
</dbReference>
<dbReference type="PANTHER" id="PTHR45677:SF11">
    <property type="entry name" value="GLUTAMATE DECARBOXYLASE 2"/>
    <property type="match status" value="1"/>
</dbReference>
<dbReference type="PANTHER" id="PTHR45677">
    <property type="entry name" value="GLUTAMATE DECARBOXYLASE-RELATED"/>
    <property type="match status" value="1"/>
</dbReference>
<dbReference type="Pfam" id="PF00282">
    <property type="entry name" value="Pyridoxal_deC"/>
    <property type="match status" value="1"/>
</dbReference>
<dbReference type="SUPFAM" id="SSF53383">
    <property type="entry name" value="PLP-dependent transferases"/>
    <property type="match status" value="1"/>
</dbReference>
<dbReference type="PROSITE" id="PS00392">
    <property type="entry name" value="DDC_GAD_HDC_YDC"/>
    <property type="match status" value="1"/>
</dbReference>
<sequence>MASPGSGFWSFGSEDGSGDPENPGTARAWCQVAQKFTGGIGNKLCALLYGDSEKPAESGGSVTSRAATRKVACTCDQKPCSCPKGDVNYALLHATDLLPACEGERPTLAFLQDVMNILLQYVVKSFDRSTKVIDFHYPNELLQEYNWELADQPQNLEEILTHCQTTLKYAIKTGHPRYFNQLSTGLDMVGLAADWLTSTANTNMFTYEIAPVFVLLEYVTLKKMREIIGWPGGSGDGIFSPGGAISNMYAMLIARYKMFPEVKEKGMAAVPRLIAFTSEHSHFSLKKGAAALGIGTDSVILIKCDERGKMIPSDLERRILEVKQKGFVPFLVSATAGTTVYGAFDPLLAVADICKKYKIWMHVDAAWGGGLLMSRKHKWKLNGVERANSVTWNPHKMMGVPLQCSALLVREEGLMQSCNQMHASYLFQQDKHYDLSYDTGDKALQCGRHVDVFKLWLMWRAKGTTGFEAHIDKCLELAEYLYNIIKNREGYEMVFDGKPQHTNVCFWFVPPSLRVLEDNEERMSRLSKVAPVIKARMMEYGTTMVSYQPLGDKVNFFRMVISNPAATHQDIDFLIEEIERLGQDL</sequence>
<evidence type="ECO:0000250" key="1"/>
<evidence type="ECO:0000250" key="2">
    <source>
        <dbReference type="UniProtKB" id="Q05329"/>
    </source>
</evidence>
<evidence type="ECO:0000256" key="3">
    <source>
        <dbReference type="SAM" id="MobiDB-lite"/>
    </source>
</evidence>
<evidence type="ECO:0000269" key="4">
    <source>
    </source>
</evidence>
<evidence type="ECO:0000269" key="5">
    <source>
    </source>
</evidence>
<evidence type="ECO:0000305" key="6"/>
<evidence type="ECO:0000305" key="7">
    <source>
    </source>
</evidence>
<evidence type="ECO:0007744" key="8">
    <source>
    </source>
</evidence>